<protein>
    <recommendedName>
        <fullName evidence="1">Phosphoglucosamine mutase</fullName>
        <ecNumber evidence="1">5.4.2.10</ecNumber>
    </recommendedName>
</protein>
<accession>P57461</accession>
<name>GLMM_BUCAI</name>
<comment type="function">
    <text evidence="1">Catalyzes the conversion of glucosamine-6-phosphate to glucosamine-1-phosphate.</text>
</comment>
<comment type="catalytic activity">
    <reaction evidence="1">
        <text>alpha-D-glucosamine 1-phosphate = D-glucosamine 6-phosphate</text>
        <dbReference type="Rhea" id="RHEA:23424"/>
        <dbReference type="ChEBI" id="CHEBI:58516"/>
        <dbReference type="ChEBI" id="CHEBI:58725"/>
        <dbReference type="EC" id="5.4.2.10"/>
    </reaction>
</comment>
<comment type="cofactor">
    <cofactor evidence="1">
        <name>Mg(2+)</name>
        <dbReference type="ChEBI" id="CHEBI:18420"/>
    </cofactor>
    <text evidence="1">Binds 1 Mg(2+) ion per subunit.</text>
</comment>
<comment type="PTM">
    <text evidence="1">Activated by phosphorylation.</text>
</comment>
<comment type="similarity">
    <text evidence="1">Belongs to the phosphohexose mutase family.</text>
</comment>
<gene>
    <name evidence="1" type="primary">glmM</name>
    <name type="synonym">mrsA</name>
    <name type="ordered locus">BU381</name>
</gene>
<dbReference type="EC" id="5.4.2.10" evidence="1"/>
<dbReference type="EMBL" id="BA000003">
    <property type="protein sequence ID" value="BAB13084.1"/>
    <property type="molecule type" value="Genomic_DNA"/>
</dbReference>
<dbReference type="RefSeq" id="NP_240198.1">
    <property type="nucleotide sequence ID" value="NC_002528.1"/>
</dbReference>
<dbReference type="RefSeq" id="WP_009874338.1">
    <property type="nucleotide sequence ID" value="NZ_AP036055.1"/>
</dbReference>
<dbReference type="SMR" id="P57461"/>
<dbReference type="STRING" id="563178.BUAP5A_374"/>
<dbReference type="EnsemblBacteria" id="BAB13084">
    <property type="protein sequence ID" value="BAB13084"/>
    <property type="gene ID" value="BAB13084"/>
</dbReference>
<dbReference type="KEGG" id="buc:BU381"/>
<dbReference type="PATRIC" id="fig|107806.10.peg.395"/>
<dbReference type="eggNOG" id="COG1109">
    <property type="taxonomic scope" value="Bacteria"/>
</dbReference>
<dbReference type="HOGENOM" id="CLU_016950_7_0_6"/>
<dbReference type="Proteomes" id="UP000001806">
    <property type="component" value="Chromosome"/>
</dbReference>
<dbReference type="GO" id="GO:0005829">
    <property type="term" value="C:cytosol"/>
    <property type="evidence" value="ECO:0007669"/>
    <property type="project" value="TreeGrafter"/>
</dbReference>
<dbReference type="GO" id="GO:0000287">
    <property type="term" value="F:magnesium ion binding"/>
    <property type="evidence" value="ECO:0007669"/>
    <property type="project" value="UniProtKB-UniRule"/>
</dbReference>
<dbReference type="GO" id="GO:0008966">
    <property type="term" value="F:phosphoglucosamine mutase activity"/>
    <property type="evidence" value="ECO:0007669"/>
    <property type="project" value="UniProtKB-UniRule"/>
</dbReference>
<dbReference type="GO" id="GO:0004615">
    <property type="term" value="F:phosphomannomutase activity"/>
    <property type="evidence" value="ECO:0007669"/>
    <property type="project" value="TreeGrafter"/>
</dbReference>
<dbReference type="GO" id="GO:0005975">
    <property type="term" value="P:carbohydrate metabolic process"/>
    <property type="evidence" value="ECO:0007669"/>
    <property type="project" value="InterPro"/>
</dbReference>
<dbReference type="GO" id="GO:0009252">
    <property type="term" value="P:peptidoglycan biosynthetic process"/>
    <property type="evidence" value="ECO:0007669"/>
    <property type="project" value="TreeGrafter"/>
</dbReference>
<dbReference type="GO" id="GO:0006048">
    <property type="term" value="P:UDP-N-acetylglucosamine biosynthetic process"/>
    <property type="evidence" value="ECO:0007669"/>
    <property type="project" value="TreeGrafter"/>
</dbReference>
<dbReference type="CDD" id="cd05802">
    <property type="entry name" value="GlmM"/>
    <property type="match status" value="1"/>
</dbReference>
<dbReference type="FunFam" id="3.40.120.10:FF:000001">
    <property type="entry name" value="Phosphoglucosamine mutase"/>
    <property type="match status" value="1"/>
</dbReference>
<dbReference type="FunFam" id="3.40.120.10:FF:000003">
    <property type="entry name" value="Phosphoglucosamine mutase"/>
    <property type="match status" value="1"/>
</dbReference>
<dbReference type="Gene3D" id="3.40.120.10">
    <property type="entry name" value="Alpha-D-Glucose-1,6-Bisphosphate, subunit A, domain 3"/>
    <property type="match status" value="3"/>
</dbReference>
<dbReference type="Gene3D" id="3.30.310.50">
    <property type="entry name" value="Alpha-D-phosphohexomutase, C-terminal domain"/>
    <property type="match status" value="1"/>
</dbReference>
<dbReference type="HAMAP" id="MF_01554_B">
    <property type="entry name" value="GlmM_B"/>
    <property type="match status" value="1"/>
</dbReference>
<dbReference type="InterPro" id="IPR005844">
    <property type="entry name" value="A-D-PHexomutase_a/b/a-I"/>
</dbReference>
<dbReference type="InterPro" id="IPR016055">
    <property type="entry name" value="A-D-PHexomutase_a/b/a-I/II/III"/>
</dbReference>
<dbReference type="InterPro" id="IPR005845">
    <property type="entry name" value="A-D-PHexomutase_a/b/a-II"/>
</dbReference>
<dbReference type="InterPro" id="IPR005846">
    <property type="entry name" value="A-D-PHexomutase_a/b/a-III"/>
</dbReference>
<dbReference type="InterPro" id="IPR005843">
    <property type="entry name" value="A-D-PHexomutase_C"/>
</dbReference>
<dbReference type="InterPro" id="IPR036900">
    <property type="entry name" value="A-D-PHexomutase_C_sf"/>
</dbReference>
<dbReference type="InterPro" id="IPR016066">
    <property type="entry name" value="A-D-PHexomutase_CS"/>
</dbReference>
<dbReference type="InterPro" id="IPR005841">
    <property type="entry name" value="Alpha-D-phosphohexomutase_SF"/>
</dbReference>
<dbReference type="InterPro" id="IPR006352">
    <property type="entry name" value="GlmM_bact"/>
</dbReference>
<dbReference type="InterPro" id="IPR050060">
    <property type="entry name" value="Phosphoglucosamine_mutase"/>
</dbReference>
<dbReference type="NCBIfam" id="TIGR01455">
    <property type="entry name" value="glmM"/>
    <property type="match status" value="1"/>
</dbReference>
<dbReference type="NCBIfam" id="NF008139">
    <property type="entry name" value="PRK10887.1"/>
    <property type="match status" value="1"/>
</dbReference>
<dbReference type="PANTHER" id="PTHR42946:SF1">
    <property type="entry name" value="PHOSPHOGLUCOMUTASE (ALPHA-D-GLUCOSE-1,6-BISPHOSPHATE-DEPENDENT)"/>
    <property type="match status" value="1"/>
</dbReference>
<dbReference type="PANTHER" id="PTHR42946">
    <property type="entry name" value="PHOSPHOHEXOSE MUTASE"/>
    <property type="match status" value="1"/>
</dbReference>
<dbReference type="Pfam" id="PF02878">
    <property type="entry name" value="PGM_PMM_I"/>
    <property type="match status" value="1"/>
</dbReference>
<dbReference type="Pfam" id="PF02879">
    <property type="entry name" value="PGM_PMM_II"/>
    <property type="match status" value="1"/>
</dbReference>
<dbReference type="Pfam" id="PF02880">
    <property type="entry name" value="PGM_PMM_III"/>
    <property type="match status" value="1"/>
</dbReference>
<dbReference type="Pfam" id="PF00408">
    <property type="entry name" value="PGM_PMM_IV"/>
    <property type="match status" value="1"/>
</dbReference>
<dbReference type="PRINTS" id="PR00509">
    <property type="entry name" value="PGMPMM"/>
</dbReference>
<dbReference type="SUPFAM" id="SSF55957">
    <property type="entry name" value="Phosphoglucomutase, C-terminal domain"/>
    <property type="match status" value="1"/>
</dbReference>
<dbReference type="SUPFAM" id="SSF53738">
    <property type="entry name" value="Phosphoglucomutase, first 3 domains"/>
    <property type="match status" value="3"/>
</dbReference>
<dbReference type="PROSITE" id="PS00710">
    <property type="entry name" value="PGM_PMM"/>
    <property type="match status" value="1"/>
</dbReference>
<reference key="1">
    <citation type="journal article" date="2000" name="Nature">
        <title>Genome sequence of the endocellular bacterial symbiont of aphids Buchnera sp. APS.</title>
        <authorList>
            <person name="Shigenobu S."/>
            <person name="Watanabe H."/>
            <person name="Hattori M."/>
            <person name="Sakaki Y."/>
            <person name="Ishikawa H."/>
        </authorList>
    </citation>
    <scope>NUCLEOTIDE SEQUENCE [LARGE SCALE GENOMIC DNA]</scope>
    <source>
        <strain>APS</strain>
    </source>
</reference>
<evidence type="ECO:0000255" key="1">
    <source>
        <dbReference type="HAMAP-Rule" id="MF_01554"/>
    </source>
</evidence>
<keyword id="KW-0413">Isomerase</keyword>
<keyword id="KW-0460">Magnesium</keyword>
<keyword id="KW-0479">Metal-binding</keyword>
<keyword id="KW-0597">Phosphoprotein</keyword>
<keyword id="KW-1185">Reference proteome</keyword>
<sequence>MTFLQYFKTDGIRGKVGVNPITPDFLLKLGWSIGIVLGKNKTQKIIIGRDTRISGTMLQSILEFGILSTGVSTLLAGCMPTSAISYFTKSLNASAGIVISGSHNPFYDNGIKIFYKNGVKLTKEIEFSIEQKVQHTFLYPDYVNFGHSNNILDPESLYIDFCKKNFPKDLNLSKFTIILDCANGATFKIAPKIFEDLGARVITVAINPNGVNINQNSGSTNILMLKKIVLSESADLGLAFDGDGDRVIMVDHLGNQVDGDQIIYIIAKEYLKENKLKGGVVGTSMTNMGVILGLKKLGIPFCPAQIGDRNVYEKIKEKKWILGAEKSGHIVLLDKHSTGDGIIASLQVLLTMINNHMTLYDLSNQIKLFPQVFLNIFLKQDKDFEKDIKIQNILTQYKNILGQNSRVLVRRSGTEPCIRIMVEGEDYLKVYELAQYIGKTIKLL</sequence>
<organism>
    <name type="scientific">Buchnera aphidicola subsp. Acyrthosiphon pisum (strain APS)</name>
    <name type="common">Acyrthosiphon pisum symbiotic bacterium</name>
    <dbReference type="NCBI Taxonomy" id="107806"/>
    <lineage>
        <taxon>Bacteria</taxon>
        <taxon>Pseudomonadati</taxon>
        <taxon>Pseudomonadota</taxon>
        <taxon>Gammaproteobacteria</taxon>
        <taxon>Enterobacterales</taxon>
        <taxon>Erwiniaceae</taxon>
        <taxon>Buchnera</taxon>
    </lineage>
</organism>
<feature type="chain" id="PRO_0000147860" description="Phosphoglucosamine mutase">
    <location>
        <begin position="1"/>
        <end position="444"/>
    </location>
</feature>
<feature type="active site" description="Phosphoserine intermediate" evidence="1">
    <location>
        <position position="102"/>
    </location>
</feature>
<feature type="binding site" description="via phosphate group" evidence="1">
    <location>
        <position position="102"/>
    </location>
    <ligand>
        <name>Mg(2+)</name>
        <dbReference type="ChEBI" id="CHEBI:18420"/>
    </ligand>
</feature>
<feature type="binding site" evidence="1">
    <location>
        <position position="241"/>
    </location>
    <ligand>
        <name>Mg(2+)</name>
        <dbReference type="ChEBI" id="CHEBI:18420"/>
    </ligand>
</feature>
<feature type="binding site" evidence="1">
    <location>
        <position position="243"/>
    </location>
    <ligand>
        <name>Mg(2+)</name>
        <dbReference type="ChEBI" id="CHEBI:18420"/>
    </ligand>
</feature>
<feature type="binding site" evidence="1">
    <location>
        <position position="245"/>
    </location>
    <ligand>
        <name>Mg(2+)</name>
        <dbReference type="ChEBI" id="CHEBI:18420"/>
    </ligand>
</feature>
<feature type="modified residue" description="Phosphoserine" evidence="1">
    <location>
        <position position="102"/>
    </location>
</feature>
<proteinExistence type="inferred from homology"/>